<comment type="function">
    <text evidence="4">(Microbial infection) Facilitates efficient midgut colonization by Plasmodium berghei parasites (PubMed:36862755). Promotes successful transmission of Plasmodium berghei at low infection densities (PubMed:36862755).</text>
</comment>
<comment type="function">
    <text evidence="4">(Microbial infection) Facilitates efficient midgut colonization by Plasmodium falciparum.</text>
</comment>
<comment type="subunit">
    <text evidence="1">Homodimer.</text>
</comment>
<comment type="subcellular location">
    <subcellularLocation>
        <location evidence="4">Secreted</location>
    </subcellularLocation>
</comment>
<comment type="tissue specificity">
    <text evidence="4">Female salivary gland (at protein level) (PubMed:36862755). Not detected in female carcass without salivary glands, midgut and hemolymph (at protein level) (PubMed:36862755). Probably not expressed in male tissues (PubMed:36862755).</text>
</comment>
<comment type="disruption phenotype">
    <text evidence="4">No significant effects on mosquito fitness (PubMed:36862755). No significant effects on blood feeding behavior of female mosquitoes (PubMed:36862755).</text>
</comment>
<comment type="disruption phenotype">
    <text evidence="4">(Microbial infection) Decrease in microgametocytemia and numbers of traversed ookinetes when female mosquitoes are fed on Plasmodium berghei-infected mice (PubMed:36862755). Fewer Plasmodium berghei oocysts in the mosquito midgut on days 7 and 8 post infection (PubMed:36862755). Decrease in parasite transmission from mosquitoes with low Plasmodium berghei loads (PubMed:36862755). Reduced prevalence of infection and fewer Plasmodium falciparum oocysts in the mosquito midgut after infection (PubMed:36862755). No significant effects on recognition of the salivary glands by Plasmodium berghei sporozoites (PubMed:36862755).</text>
</comment>
<dbReference type="SMR" id="A0A8W7Q4I4"/>
<dbReference type="EnsemblMetazoa" id="ACOM042671-RA">
    <property type="protein sequence ID" value="ACOM042671-PA"/>
    <property type="gene ID" value="ACOM042671"/>
</dbReference>
<dbReference type="VEuPathDB" id="VectorBase:ACON2_041926"/>
<dbReference type="Proteomes" id="UP000075882">
    <property type="component" value="Unassembled WGS sequence"/>
</dbReference>
<dbReference type="Proteomes" id="UP001105220">
    <property type="component" value="Unplaced"/>
</dbReference>
<dbReference type="GO" id="GO:0005576">
    <property type="term" value="C:extracellular region"/>
    <property type="evidence" value="ECO:0007669"/>
    <property type="project" value="UniProtKB-SubCell"/>
</dbReference>
<sequence length="431" mass="49309">MSVRDYSGVQVISSRKHRSMSRLPTVLLLLASAAVLAAGGQEATEDPFADETDQCQISVSAETMKSLHGGSMQPDGTCDNLWESFLSQFHQVRENLTACQERAAAGPAPDPSSQFCQQLLDDAQRQMEQEHRQYAATLEEQLHAAQQETQQEQEMKKALQKQLDALTDSRNALYIDLLLANIAIGETKQALSYYNLMPASMPIDKLHEQIVRFVYRVTIYQDQRLLNLMRFVRDIPSVEERRSLYQLAQREVQKRPSQRDGYVAAVYALSVREDLPVYQANRQLYDDLVRQSETRLKEQVANGNFKQAAELAARQPQHFRQLQTSLATIELKHWRKFDRFVPYANALPQPAQRLEVLRVLLSQIGDREKKTSHKYLVKAARQFDICEQFIGRGKVDQAVKKQLEELRGKFATFAKGKNYQHYLSESRKSSG</sequence>
<reference evidence="7" key="1">
    <citation type="journal article" date="2019" name="Genes (Basel)">
        <title>A High-Quality De novo Genome Assembly from a Single Mosquito Using PacBio Sequencing.</title>
        <authorList>
            <person name="Kingan S.B."/>
            <person name="Heaton H."/>
            <person name="Cudini J."/>
            <person name="Lambert C.C."/>
            <person name="Baybayan P."/>
            <person name="Galvin B.D."/>
            <person name="Durbin R."/>
            <person name="Korlach J."/>
            <person name="Lawniczak M.K.N."/>
        </authorList>
    </citation>
    <scope>NUCLEOTIDE SEQUENCE [LARGE SCALE GENOMIC DNA]</scope>
    <source>
        <strain evidence="5">Ngousso</strain>
    </source>
</reference>
<reference evidence="7" key="2">
    <citation type="journal article" date="2023" name="PLoS Pathog.">
        <title>The salivary protein Saglin facilitates efficient midgut colonization of Anopheles mosquitoes by malaria parasites.</title>
        <authorList>
            <person name="Klug D."/>
            <person name="Gautier A."/>
            <person name="Calvo E."/>
            <person name="Marois E."/>
            <person name="Blandin S.A."/>
        </authorList>
    </citation>
    <scope>FUNCTION (MICROBIAL INFECTION)</scope>
    <scope>SUBCELLULAR LOCATION</scope>
    <scope>TISSUE SPECIFICITY</scope>
    <scope>DISRUPTION PHENOTYPE</scope>
    <scope>DISRUPTION PHENOTYPE (MICROBIAL INFECTION)</scope>
    <source>
        <strain evidence="6">Ngousso</strain>
    </source>
</reference>
<name>SGLN_ANOCL</name>
<proteinExistence type="evidence at protein level"/>
<gene>
    <name evidence="7" type="primary">SG1f</name>
</gene>
<organism>
    <name type="scientific">Anopheles coluzzii</name>
    <name type="common">African malaria mosquito</name>
    <dbReference type="NCBI Taxonomy" id="1518534"/>
    <lineage>
        <taxon>Eukaryota</taxon>
        <taxon>Metazoa</taxon>
        <taxon>Ecdysozoa</taxon>
        <taxon>Arthropoda</taxon>
        <taxon>Hexapoda</taxon>
        <taxon>Insecta</taxon>
        <taxon>Pterygota</taxon>
        <taxon>Neoptera</taxon>
        <taxon>Endopterygota</taxon>
        <taxon>Diptera</taxon>
        <taxon>Nematocera</taxon>
        <taxon>Culicoidea</taxon>
        <taxon>Culicidae</taxon>
        <taxon>Anophelinae</taxon>
        <taxon>Anopheles</taxon>
    </lineage>
</organism>
<evidence type="ECO:0000250" key="1">
    <source>
        <dbReference type="UniProtKB" id="F7IW82"/>
    </source>
</evidence>
<evidence type="ECO:0000255" key="2"/>
<evidence type="ECO:0000255" key="3">
    <source>
        <dbReference type="PROSITE-ProRule" id="PRU00498"/>
    </source>
</evidence>
<evidence type="ECO:0000269" key="4">
    <source>
    </source>
</evidence>
<evidence type="ECO:0000303" key="5">
    <source>
    </source>
</evidence>
<evidence type="ECO:0000303" key="6">
    <source>
    </source>
</evidence>
<evidence type="ECO:0000305" key="7"/>
<protein>
    <recommendedName>
        <fullName evidence="6">Saglin</fullName>
    </recommendedName>
</protein>
<accession>A0A8W7Q4I4</accession>
<keyword id="KW-0175">Coiled coil</keyword>
<keyword id="KW-0325">Glycoprotein</keyword>
<keyword id="KW-0964">Secreted</keyword>
<keyword id="KW-0732">Signal</keyword>
<feature type="signal peptide" evidence="2">
    <location>
        <begin position="1"/>
        <end position="39"/>
    </location>
</feature>
<feature type="chain" id="PRO_5026195953" description="Saglin" evidence="2">
    <location>
        <begin position="40"/>
        <end position="431"/>
    </location>
</feature>
<feature type="coiled-coil region" evidence="2">
    <location>
        <begin position="120"/>
        <end position="169"/>
    </location>
</feature>
<feature type="glycosylation site" description="N-linked (GlcNAc...) asparagine" evidence="3">
    <location>
        <position position="95"/>
    </location>
</feature>